<sequence length="105" mass="12004">MFAVIKAGGKQYKVDRNSIIKVEKIDGELGSKIQFDQILMIGEYSKPSFIGTPIVKGAVVTAEITNQLKDNKIIVFKKKRRKNYRRKAGHRQELTELKILDITKQ</sequence>
<protein>
    <recommendedName>
        <fullName evidence="1">Large ribosomal subunit protein bL21</fullName>
    </recommendedName>
    <alternativeName>
        <fullName evidence="2">50S ribosomal protein L21</fullName>
    </alternativeName>
</protein>
<accession>C3PLM8</accession>
<comment type="function">
    <text evidence="1">This protein binds to 23S rRNA in the presence of protein L20.</text>
</comment>
<comment type="subunit">
    <text evidence="1">Part of the 50S ribosomal subunit. Contacts protein L20.</text>
</comment>
<comment type="similarity">
    <text evidence="1">Belongs to the bacterial ribosomal protein bL21 family.</text>
</comment>
<gene>
    <name evidence="1" type="primary">rplU</name>
    <name type="ordered locus">RAF_ORF1057</name>
</gene>
<feature type="chain" id="PRO_1000214900" description="Large ribosomal subunit protein bL21">
    <location>
        <begin position="1"/>
        <end position="105"/>
    </location>
</feature>
<keyword id="KW-0687">Ribonucleoprotein</keyword>
<keyword id="KW-0689">Ribosomal protein</keyword>
<keyword id="KW-0694">RNA-binding</keyword>
<keyword id="KW-0699">rRNA-binding</keyword>
<dbReference type="EMBL" id="CP001612">
    <property type="protein sequence ID" value="ACP53868.1"/>
    <property type="molecule type" value="Genomic_DNA"/>
</dbReference>
<dbReference type="RefSeq" id="WP_004997480.1">
    <property type="nucleotide sequence ID" value="NC_012633.1"/>
</dbReference>
<dbReference type="SMR" id="C3PLM8"/>
<dbReference type="GeneID" id="95361581"/>
<dbReference type="KEGG" id="raf:RAF_ORF1057"/>
<dbReference type="HOGENOM" id="CLU_061463_3_2_5"/>
<dbReference type="Proteomes" id="UP000002305">
    <property type="component" value="Chromosome"/>
</dbReference>
<dbReference type="GO" id="GO:0005737">
    <property type="term" value="C:cytoplasm"/>
    <property type="evidence" value="ECO:0007669"/>
    <property type="project" value="UniProtKB-ARBA"/>
</dbReference>
<dbReference type="GO" id="GO:1990904">
    <property type="term" value="C:ribonucleoprotein complex"/>
    <property type="evidence" value="ECO:0007669"/>
    <property type="project" value="UniProtKB-KW"/>
</dbReference>
<dbReference type="GO" id="GO:0005840">
    <property type="term" value="C:ribosome"/>
    <property type="evidence" value="ECO:0007669"/>
    <property type="project" value="UniProtKB-KW"/>
</dbReference>
<dbReference type="GO" id="GO:0019843">
    <property type="term" value="F:rRNA binding"/>
    <property type="evidence" value="ECO:0007669"/>
    <property type="project" value="UniProtKB-UniRule"/>
</dbReference>
<dbReference type="GO" id="GO:0003735">
    <property type="term" value="F:structural constituent of ribosome"/>
    <property type="evidence" value="ECO:0007669"/>
    <property type="project" value="InterPro"/>
</dbReference>
<dbReference type="GO" id="GO:0006412">
    <property type="term" value="P:translation"/>
    <property type="evidence" value="ECO:0007669"/>
    <property type="project" value="UniProtKB-UniRule"/>
</dbReference>
<dbReference type="HAMAP" id="MF_01363">
    <property type="entry name" value="Ribosomal_bL21"/>
    <property type="match status" value="1"/>
</dbReference>
<dbReference type="InterPro" id="IPR028909">
    <property type="entry name" value="bL21-like"/>
</dbReference>
<dbReference type="InterPro" id="IPR036164">
    <property type="entry name" value="bL21-like_sf"/>
</dbReference>
<dbReference type="InterPro" id="IPR001787">
    <property type="entry name" value="Ribosomal_bL21"/>
</dbReference>
<dbReference type="InterPro" id="IPR018258">
    <property type="entry name" value="Ribosomal_bL21_CS"/>
</dbReference>
<dbReference type="NCBIfam" id="TIGR00061">
    <property type="entry name" value="L21"/>
    <property type="match status" value="1"/>
</dbReference>
<dbReference type="PANTHER" id="PTHR21349">
    <property type="entry name" value="50S RIBOSOMAL PROTEIN L21"/>
    <property type="match status" value="1"/>
</dbReference>
<dbReference type="PANTHER" id="PTHR21349:SF0">
    <property type="entry name" value="LARGE RIBOSOMAL SUBUNIT PROTEIN BL21M"/>
    <property type="match status" value="1"/>
</dbReference>
<dbReference type="Pfam" id="PF00829">
    <property type="entry name" value="Ribosomal_L21p"/>
    <property type="match status" value="1"/>
</dbReference>
<dbReference type="SUPFAM" id="SSF141091">
    <property type="entry name" value="L21p-like"/>
    <property type="match status" value="1"/>
</dbReference>
<dbReference type="PROSITE" id="PS01169">
    <property type="entry name" value="RIBOSOMAL_L21"/>
    <property type="match status" value="1"/>
</dbReference>
<proteinExistence type="inferred from homology"/>
<reference key="1">
    <citation type="journal article" date="2009" name="BMC Genomics">
        <title>Analysis of the Rickettsia africae genome reveals that virulence acquisition in Rickettsia species may be explained by genome reduction.</title>
        <authorList>
            <person name="Fournier P.-E."/>
            <person name="El Karkouri K."/>
            <person name="Leroy Q."/>
            <person name="Robert C."/>
            <person name="Giumelli B."/>
            <person name="Renesto P."/>
            <person name="Socolovschi C."/>
            <person name="Parola P."/>
            <person name="Audic S."/>
            <person name="Raoult D."/>
        </authorList>
    </citation>
    <scope>NUCLEOTIDE SEQUENCE [LARGE SCALE GENOMIC DNA]</scope>
    <source>
        <strain>ESF-5</strain>
    </source>
</reference>
<name>RL21_RICAE</name>
<organism>
    <name type="scientific">Rickettsia africae (strain ESF-5)</name>
    <dbReference type="NCBI Taxonomy" id="347255"/>
    <lineage>
        <taxon>Bacteria</taxon>
        <taxon>Pseudomonadati</taxon>
        <taxon>Pseudomonadota</taxon>
        <taxon>Alphaproteobacteria</taxon>
        <taxon>Rickettsiales</taxon>
        <taxon>Rickettsiaceae</taxon>
        <taxon>Rickettsieae</taxon>
        <taxon>Rickettsia</taxon>
        <taxon>spotted fever group</taxon>
    </lineage>
</organism>
<evidence type="ECO:0000255" key="1">
    <source>
        <dbReference type="HAMAP-Rule" id="MF_01363"/>
    </source>
</evidence>
<evidence type="ECO:0000305" key="2"/>